<reference key="1">
    <citation type="submission" date="2004-06" db="EMBL/GenBank/DDBJ databases">
        <authorList>
            <person name="Birren B.W."/>
            <person name="Stange-Thomann N."/>
            <person name="Hafez N."/>
            <person name="DeCaprio D."/>
            <person name="Fisher S."/>
            <person name="Butler J."/>
            <person name="Elkins T."/>
            <person name="Kodira C.D."/>
            <person name="Major J."/>
            <person name="Wang S."/>
            <person name="Nicol R."/>
            <person name="Nusbaum C."/>
        </authorList>
    </citation>
    <scope>NUCLEOTIDE SEQUENCE [LARGE SCALE GENOMIC DNA]</scope>
    <source>
        <strain>ATCC 33453 / NBRC 100688 / NCTC 11704 / L1</strain>
    </source>
</reference>
<dbReference type="EC" id="3.6.5.n1" evidence="1"/>
<dbReference type="EMBL" id="AE017263">
    <property type="protein sequence ID" value="AAT75831.1"/>
    <property type="molecule type" value="Genomic_DNA"/>
</dbReference>
<dbReference type="RefSeq" id="WP_011183371.1">
    <property type="nucleotide sequence ID" value="NC_006055.1"/>
</dbReference>
<dbReference type="RefSeq" id="YP_053715.1">
    <property type="nucleotide sequence ID" value="NC_006055.1"/>
</dbReference>
<dbReference type="SMR" id="Q6F0Z2"/>
<dbReference type="STRING" id="265311.Mfl473"/>
<dbReference type="PaxDb" id="265311-Mfl473"/>
<dbReference type="EnsemblBacteria" id="AAT75831">
    <property type="protein sequence ID" value="AAT75831"/>
    <property type="gene ID" value="Mfl473"/>
</dbReference>
<dbReference type="GeneID" id="2898214"/>
<dbReference type="KEGG" id="mfl:Mfl473"/>
<dbReference type="PATRIC" id="fig|265311.5.peg.479"/>
<dbReference type="eggNOG" id="COG0481">
    <property type="taxonomic scope" value="Bacteria"/>
</dbReference>
<dbReference type="HOGENOM" id="CLU_009995_3_3_14"/>
<dbReference type="OrthoDB" id="9804431at2"/>
<dbReference type="Proteomes" id="UP000006647">
    <property type="component" value="Chromosome"/>
</dbReference>
<dbReference type="GO" id="GO:0005886">
    <property type="term" value="C:plasma membrane"/>
    <property type="evidence" value="ECO:0007669"/>
    <property type="project" value="UniProtKB-SubCell"/>
</dbReference>
<dbReference type="GO" id="GO:0005525">
    <property type="term" value="F:GTP binding"/>
    <property type="evidence" value="ECO:0007669"/>
    <property type="project" value="UniProtKB-UniRule"/>
</dbReference>
<dbReference type="GO" id="GO:0003924">
    <property type="term" value="F:GTPase activity"/>
    <property type="evidence" value="ECO:0007669"/>
    <property type="project" value="UniProtKB-UniRule"/>
</dbReference>
<dbReference type="GO" id="GO:0043022">
    <property type="term" value="F:ribosome binding"/>
    <property type="evidence" value="ECO:0007669"/>
    <property type="project" value="UniProtKB-UniRule"/>
</dbReference>
<dbReference type="GO" id="GO:0003746">
    <property type="term" value="F:translation elongation factor activity"/>
    <property type="evidence" value="ECO:0007669"/>
    <property type="project" value="UniProtKB-UniRule"/>
</dbReference>
<dbReference type="GO" id="GO:0045727">
    <property type="term" value="P:positive regulation of translation"/>
    <property type="evidence" value="ECO:0007669"/>
    <property type="project" value="UniProtKB-UniRule"/>
</dbReference>
<dbReference type="CDD" id="cd03699">
    <property type="entry name" value="EF4_II"/>
    <property type="match status" value="1"/>
</dbReference>
<dbReference type="CDD" id="cd16260">
    <property type="entry name" value="EF4_III"/>
    <property type="match status" value="1"/>
</dbReference>
<dbReference type="CDD" id="cd01890">
    <property type="entry name" value="LepA"/>
    <property type="match status" value="1"/>
</dbReference>
<dbReference type="CDD" id="cd03709">
    <property type="entry name" value="lepA_C"/>
    <property type="match status" value="1"/>
</dbReference>
<dbReference type="FunFam" id="3.40.50.300:FF:000078">
    <property type="entry name" value="Elongation factor 4"/>
    <property type="match status" value="1"/>
</dbReference>
<dbReference type="FunFam" id="2.40.30.10:FF:000015">
    <property type="entry name" value="Translation factor GUF1, mitochondrial"/>
    <property type="match status" value="1"/>
</dbReference>
<dbReference type="FunFam" id="3.30.70.240:FF:000007">
    <property type="entry name" value="Translation factor GUF1, mitochondrial"/>
    <property type="match status" value="1"/>
</dbReference>
<dbReference type="FunFam" id="3.30.70.2570:FF:000001">
    <property type="entry name" value="Translation factor GUF1, mitochondrial"/>
    <property type="match status" value="1"/>
</dbReference>
<dbReference type="FunFam" id="3.30.70.870:FF:000004">
    <property type="entry name" value="Translation factor GUF1, mitochondrial"/>
    <property type="match status" value="1"/>
</dbReference>
<dbReference type="Gene3D" id="3.30.70.240">
    <property type="match status" value="1"/>
</dbReference>
<dbReference type="Gene3D" id="3.30.70.2570">
    <property type="entry name" value="Elongation factor 4, C-terminal domain"/>
    <property type="match status" value="1"/>
</dbReference>
<dbReference type="Gene3D" id="3.30.70.870">
    <property type="entry name" value="Elongation Factor G (Translational Gtpase), domain 3"/>
    <property type="match status" value="1"/>
</dbReference>
<dbReference type="Gene3D" id="3.40.50.300">
    <property type="entry name" value="P-loop containing nucleotide triphosphate hydrolases"/>
    <property type="match status" value="1"/>
</dbReference>
<dbReference type="Gene3D" id="2.40.30.10">
    <property type="entry name" value="Translation factors"/>
    <property type="match status" value="1"/>
</dbReference>
<dbReference type="HAMAP" id="MF_00071">
    <property type="entry name" value="LepA"/>
    <property type="match status" value="1"/>
</dbReference>
<dbReference type="InterPro" id="IPR006297">
    <property type="entry name" value="EF-4"/>
</dbReference>
<dbReference type="InterPro" id="IPR035647">
    <property type="entry name" value="EFG_III/V"/>
</dbReference>
<dbReference type="InterPro" id="IPR000640">
    <property type="entry name" value="EFG_V-like"/>
</dbReference>
<dbReference type="InterPro" id="IPR004161">
    <property type="entry name" value="EFTu-like_2"/>
</dbReference>
<dbReference type="InterPro" id="IPR031157">
    <property type="entry name" value="G_TR_CS"/>
</dbReference>
<dbReference type="InterPro" id="IPR038363">
    <property type="entry name" value="LepA_C_sf"/>
</dbReference>
<dbReference type="InterPro" id="IPR013842">
    <property type="entry name" value="LepA_CTD"/>
</dbReference>
<dbReference type="InterPro" id="IPR035654">
    <property type="entry name" value="LepA_IV"/>
</dbReference>
<dbReference type="InterPro" id="IPR027417">
    <property type="entry name" value="P-loop_NTPase"/>
</dbReference>
<dbReference type="InterPro" id="IPR005225">
    <property type="entry name" value="Small_GTP-bd"/>
</dbReference>
<dbReference type="InterPro" id="IPR000795">
    <property type="entry name" value="T_Tr_GTP-bd_dom"/>
</dbReference>
<dbReference type="InterPro" id="IPR009000">
    <property type="entry name" value="Transl_B-barrel_sf"/>
</dbReference>
<dbReference type="NCBIfam" id="TIGR01393">
    <property type="entry name" value="lepA"/>
    <property type="match status" value="1"/>
</dbReference>
<dbReference type="NCBIfam" id="TIGR00231">
    <property type="entry name" value="small_GTP"/>
    <property type="match status" value="1"/>
</dbReference>
<dbReference type="PANTHER" id="PTHR43512:SF4">
    <property type="entry name" value="TRANSLATION FACTOR GUF1 HOMOLOG, CHLOROPLASTIC"/>
    <property type="match status" value="1"/>
</dbReference>
<dbReference type="PANTHER" id="PTHR43512">
    <property type="entry name" value="TRANSLATION FACTOR GUF1-RELATED"/>
    <property type="match status" value="1"/>
</dbReference>
<dbReference type="Pfam" id="PF00679">
    <property type="entry name" value="EFG_C"/>
    <property type="match status" value="1"/>
</dbReference>
<dbReference type="Pfam" id="PF00009">
    <property type="entry name" value="GTP_EFTU"/>
    <property type="match status" value="1"/>
</dbReference>
<dbReference type="Pfam" id="PF03144">
    <property type="entry name" value="GTP_EFTU_D2"/>
    <property type="match status" value="1"/>
</dbReference>
<dbReference type="Pfam" id="PF06421">
    <property type="entry name" value="LepA_C"/>
    <property type="match status" value="1"/>
</dbReference>
<dbReference type="PRINTS" id="PR00315">
    <property type="entry name" value="ELONGATNFCT"/>
</dbReference>
<dbReference type="SUPFAM" id="SSF54980">
    <property type="entry name" value="EF-G C-terminal domain-like"/>
    <property type="match status" value="2"/>
</dbReference>
<dbReference type="SUPFAM" id="SSF52540">
    <property type="entry name" value="P-loop containing nucleoside triphosphate hydrolases"/>
    <property type="match status" value="1"/>
</dbReference>
<dbReference type="SUPFAM" id="SSF50447">
    <property type="entry name" value="Translation proteins"/>
    <property type="match status" value="1"/>
</dbReference>
<dbReference type="PROSITE" id="PS00301">
    <property type="entry name" value="G_TR_1"/>
    <property type="match status" value="1"/>
</dbReference>
<dbReference type="PROSITE" id="PS51722">
    <property type="entry name" value="G_TR_2"/>
    <property type="match status" value="1"/>
</dbReference>
<feature type="chain" id="PRO_0000176294" description="Elongation factor 4">
    <location>
        <begin position="1"/>
        <end position="600"/>
    </location>
</feature>
<feature type="domain" description="tr-type G">
    <location>
        <begin position="4"/>
        <end position="186"/>
    </location>
</feature>
<feature type="binding site" evidence="1">
    <location>
        <begin position="16"/>
        <end position="21"/>
    </location>
    <ligand>
        <name>GTP</name>
        <dbReference type="ChEBI" id="CHEBI:37565"/>
    </ligand>
</feature>
<feature type="binding site" evidence="1">
    <location>
        <begin position="133"/>
        <end position="136"/>
    </location>
    <ligand>
        <name>GTP</name>
        <dbReference type="ChEBI" id="CHEBI:37565"/>
    </ligand>
</feature>
<comment type="function">
    <text evidence="1">Required for accurate and efficient protein synthesis under certain stress conditions. May act as a fidelity factor of the translation reaction, by catalyzing a one-codon backward translocation of tRNAs on improperly translocated ribosomes. Back-translocation proceeds from a post-translocation (POST) complex to a pre-translocation (PRE) complex, thus giving elongation factor G a second chance to translocate the tRNAs correctly. Binds to ribosomes in a GTP-dependent manner.</text>
</comment>
<comment type="catalytic activity">
    <reaction evidence="1">
        <text>GTP + H2O = GDP + phosphate + H(+)</text>
        <dbReference type="Rhea" id="RHEA:19669"/>
        <dbReference type="ChEBI" id="CHEBI:15377"/>
        <dbReference type="ChEBI" id="CHEBI:15378"/>
        <dbReference type="ChEBI" id="CHEBI:37565"/>
        <dbReference type="ChEBI" id="CHEBI:43474"/>
        <dbReference type="ChEBI" id="CHEBI:58189"/>
        <dbReference type="EC" id="3.6.5.n1"/>
    </reaction>
</comment>
<comment type="subcellular location">
    <subcellularLocation>
        <location evidence="1">Cell membrane</location>
        <topology evidence="1">Peripheral membrane protein</topology>
        <orientation evidence="1">Cytoplasmic side</orientation>
    </subcellularLocation>
</comment>
<comment type="similarity">
    <text evidence="1">Belongs to the TRAFAC class translation factor GTPase superfamily. Classic translation factor GTPase family. LepA subfamily.</text>
</comment>
<name>LEPA_MESFL</name>
<evidence type="ECO:0000255" key="1">
    <source>
        <dbReference type="HAMAP-Rule" id="MF_00071"/>
    </source>
</evidence>
<proteinExistence type="inferred from homology"/>
<sequence>MDKSKIRNFSIIAHIDHGKSTLADRILELTNTVTKREMQEQLLDSMDIERERGITIKLNSVQLYYKAKDGQEYTFHLIDTPGHVDFAYEVSRSLAACEGAILVVDATQGIEAQTLANVYLAIENNLEIIPVINKVDLPSADAERVKEEIENTIGIDCSDAPLISAKTGLNVEDVLEAIVNKIPAPYDADDAKPLRALIFDSYYDKYLGVVMSIRVREGSIKVGDRIKLMANGSSYEVTELGVKNPKIVKKDQLSAGEVGWVAASIKTIKDINVGDTITTVTNSALHPLDGYKKLKPMVYCGIYPIDTNQYQDFKEALEKMELSDSSLVYEPETSQALGFGFRVGFLGLLHMEVVQERLEREYNLNLIATAPSVIYKIHLTDGTMIEIDNPAKLPDPQKIKFMEEPFVNVKIMTPKESVGDLMSLCQNKLGTYKDLQVVDDNRMMLVYDMPLAEIIFDFFNKLKSISKGYASFEYEMIGYQESQLVKMDILLNGDMVDAFSMIVNKHFAYQRGAALTKKLKELIPRQNFEVPVQATIGNKVLARETIKAYRKDVTWKLHAADKSRRKKLLNKQKEGKKKMKEIGSVEVPQEAFIAVLKLDD</sequence>
<gene>
    <name evidence="1" type="primary">lepA</name>
    <name type="ordered locus">Mfl473</name>
</gene>
<organism>
    <name type="scientific">Mesoplasma florum (strain ATCC 33453 / NBRC 100688 / NCTC 11704 / L1)</name>
    <name type="common">Acholeplasma florum</name>
    <dbReference type="NCBI Taxonomy" id="265311"/>
    <lineage>
        <taxon>Bacteria</taxon>
        <taxon>Bacillati</taxon>
        <taxon>Mycoplasmatota</taxon>
        <taxon>Mollicutes</taxon>
        <taxon>Entomoplasmatales</taxon>
        <taxon>Entomoplasmataceae</taxon>
        <taxon>Mesoplasma</taxon>
    </lineage>
</organism>
<protein>
    <recommendedName>
        <fullName evidence="1">Elongation factor 4</fullName>
        <shortName evidence="1">EF-4</shortName>
        <ecNumber evidence="1">3.6.5.n1</ecNumber>
    </recommendedName>
    <alternativeName>
        <fullName evidence="1">Ribosomal back-translocase LepA</fullName>
    </alternativeName>
</protein>
<accession>Q6F0Z2</accession>
<keyword id="KW-1003">Cell membrane</keyword>
<keyword id="KW-0342">GTP-binding</keyword>
<keyword id="KW-0378">Hydrolase</keyword>
<keyword id="KW-0472">Membrane</keyword>
<keyword id="KW-0547">Nucleotide-binding</keyword>
<keyword id="KW-0648">Protein biosynthesis</keyword>
<keyword id="KW-1185">Reference proteome</keyword>